<comment type="function">
    <text evidence="1">Binds to the 23S rRNA.</text>
</comment>
<comment type="subunit">
    <text evidence="1">Part of the 50S ribosomal subunit.</text>
</comment>
<comment type="similarity">
    <text evidence="1">Belongs to the universal ribosomal protein uL15 family.</text>
</comment>
<name>RL15_BURM1</name>
<proteinExistence type="inferred from homology"/>
<dbReference type="EMBL" id="CP000868">
    <property type="protein sequence ID" value="ABX13963.1"/>
    <property type="molecule type" value="Genomic_DNA"/>
</dbReference>
<dbReference type="EMBL" id="AP009385">
    <property type="protein sequence ID" value="BAG44871.1"/>
    <property type="molecule type" value="Genomic_DNA"/>
</dbReference>
<dbReference type="RefSeq" id="WP_006400643.1">
    <property type="nucleotide sequence ID" value="NC_010804.1"/>
</dbReference>
<dbReference type="SMR" id="A9ADL2"/>
<dbReference type="STRING" id="395019.BMULJ_02986"/>
<dbReference type="GeneID" id="93126538"/>
<dbReference type="KEGG" id="bmj:BMULJ_02986"/>
<dbReference type="KEGG" id="bmu:Bmul_0268"/>
<dbReference type="eggNOG" id="COG0200">
    <property type="taxonomic scope" value="Bacteria"/>
</dbReference>
<dbReference type="HOGENOM" id="CLU_055188_4_2_4"/>
<dbReference type="Proteomes" id="UP000008815">
    <property type="component" value="Chromosome 1"/>
</dbReference>
<dbReference type="GO" id="GO:0022625">
    <property type="term" value="C:cytosolic large ribosomal subunit"/>
    <property type="evidence" value="ECO:0007669"/>
    <property type="project" value="TreeGrafter"/>
</dbReference>
<dbReference type="GO" id="GO:0019843">
    <property type="term" value="F:rRNA binding"/>
    <property type="evidence" value="ECO:0007669"/>
    <property type="project" value="UniProtKB-UniRule"/>
</dbReference>
<dbReference type="GO" id="GO:0003735">
    <property type="term" value="F:structural constituent of ribosome"/>
    <property type="evidence" value="ECO:0007669"/>
    <property type="project" value="InterPro"/>
</dbReference>
<dbReference type="GO" id="GO:0006412">
    <property type="term" value="P:translation"/>
    <property type="evidence" value="ECO:0007669"/>
    <property type="project" value="UniProtKB-UniRule"/>
</dbReference>
<dbReference type="Gene3D" id="3.100.10.10">
    <property type="match status" value="1"/>
</dbReference>
<dbReference type="HAMAP" id="MF_01341">
    <property type="entry name" value="Ribosomal_uL15"/>
    <property type="match status" value="1"/>
</dbReference>
<dbReference type="InterPro" id="IPR030878">
    <property type="entry name" value="Ribosomal_uL15"/>
</dbReference>
<dbReference type="InterPro" id="IPR021131">
    <property type="entry name" value="Ribosomal_uL15/eL18"/>
</dbReference>
<dbReference type="InterPro" id="IPR036227">
    <property type="entry name" value="Ribosomal_uL15/eL18_sf"/>
</dbReference>
<dbReference type="InterPro" id="IPR005749">
    <property type="entry name" value="Ribosomal_uL15_bac-type"/>
</dbReference>
<dbReference type="InterPro" id="IPR001196">
    <property type="entry name" value="Ribosomal_uL15_CS"/>
</dbReference>
<dbReference type="NCBIfam" id="TIGR01071">
    <property type="entry name" value="rplO_bact"/>
    <property type="match status" value="1"/>
</dbReference>
<dbReference type="PANTHER" id="PTHR12934">
    <property type="entry name" value="50S RIBOSOMAL PROTEIN L15"/>
    <property type="match status" value="1"/>
</dbReference>
<dbReference type="PANTHER" id="PTHR12934:SF11">
    <property type="entry name" value="LARGE RIBOSOMAL SUBUNIT PROTEIN UL15M"/>
    <property type="match status" value="1"/>
</dbReference>
<dbReference type="Pfam" id="PF00828">
    <property type="entry name" value="Ribosomal_L27A"/>
    <property type="match status" value="1"/>
</dbReference>
<dbReference type="SUPFAM" id="SSF52080">
    <property type="entry name" value="Ribosomal proteins L15p and L18e"/>
    <property type="match status" value="1"/>
</dbReference>
<dbReference type="PROSITE" id="PS00475">
    <property type="entry name" value="RIBOSOMAL_L15"/>
    <property type="match status" value="1"/>
</dbReference>
<sequence length="144" mass="15096">MELNNLKPAAGAKHAKRRVGRGIGSGLGKTAGRGHKGQKSRSGGFHKVGFEGGQMPLQRRLPKRGFTSLTKEFVGEVRLGDLEKLPVDEIDLLALKQAGLVGELTKSAKIIATGELKRKIVVKGLGATKSARAAIEAAGGSFAE</sequence>
<protein>
    <recommendedName>
        <fullName evidence="1">Large ribosomal subunit protein uL15</fullName>
    </recommendedName>
    <alternativeName>
        <fullName evidence="3">50S ribosomal protein L15</fullName>
    </alternativeName>
</protein>
<organism>
    <name type="scientific">Burkholderia multivorans (strain ATCC 17616 / 249)</name>
    <dbReference type="NCBI Taxonomy" id="395019"/>
    <lineage>
        <taxon>Bacteria</taxon>
        <taxon>Pseudomonadati</taxon>
        <taxon>Pseudomonadota</taxon>
        <taxon>Betaproteobacteria</taxon>
        <taxon>Burkholderiales</taxon>
        <taxon>Burkholderiaceae</taxon>
        <taxon>Burkholderia</taxon>
        <taxon>Burkholderia cepacia complex</taxon>
    </lineage>
</organism>
<feature type="chain" id="PRO_1000142785" description="Large ribosomal subunit protein uL15">
    <location>
        <begin position="1"/>
        <end position="144"/>
    </location>
</feature>
<feature type="region of interest" description="Disordered" evidence="2">
    <location>
        <begin position="1"/>
        <end position="56"/>
    </location>
</feature>
<feature type="compositionally biased region" description="Gly residues" evidence="2">
    <location>
        <begin position="21"/>
        <end position="31"/>
    </location>
</feature>
<evidence type="ECO:0000255" key="1">
    <source>
        <dbReference type="HAMAP-Rule" id="MF_01341"/>
    </source>
</evidence>
<evidence type="ECO:0000256" key="2">
    <source>
        <dbReference type="SAM" id="MobiDB-lite"/>
    </source>
</evidence>
<evidence type="ECO:0000305" key="3"/>
<reference key="1">
    <citation type="submission" date="2007-10" db="EMBL/GenBank/DDBJ databases">
        <title>Complete sequence of chromosome 1 of Burkholderia multivorans ATCC 17616.</title>
        <authorList>
            <person name="Copeland A."/>
            <person name="Lucas S."/>
            <person name="Lapidus A."/>
            <person name="Barry K."/>
            <person name="Glavina del Rio T."/>
            <person name="Dalin E."/>
            <person name="Tice H."/>
            <person name="Pitluck S."/>
            <person name="Chain P."/>
            <person name="Malfatti S."/>
            <person name="Shin M."/>
            <person name="Vergez L."/>
            <person name="Schmutz J."/>
            <person name="Larimer F."/>
            <person name="Land M."/>
            <person name="Hauser L."/>
            <person name="Kyrpides N."/>
            <person name="Kim E."/>
            <person name="Tiedje J."/>
            <person name="Richardson P."/>
        </authorList>
    </citation>
    <scope>NUCLEOTIDE SEQUENCE [LARGE SCALE GENOMIC DNA]</scope>
    <source>
        <strain>ATCC 17616 / 249</strain>
    </source>
</reference>
<reference key="2">
    <citation type="submission" date="2007-04" db="EMBL/GenBank/DDBJ databases">
        <title>Complete genome sequence of Burkholderia multivorans ATCC 17616.</title>
        <authorList>
            <person name="Ohtsubo Y."/>
            <person name="Yamashita A."/>
            <person name="Kurokawa K."/>
            <person name="Takami H."/>
            <person name="Yuhara S."/>
            <person name="Nishiyama E."/>
            <person name="Endo R."/>
            <person name="Miyazaki R."/>
            <person name="Ono A."/>
            <person name="Yano K."/>
            <person name="Ito M."/>
            <person name="Sota M."/>
            <person name="Yuji N."/>
            <person name="Hattori M."/>
            <person name="Tsuda M."/>
        </authorList>
    </citation>
    <scope>NUCLEOTIDE SEQUENCE [LARGE SCALE GENOMIC DNA]</scope>
    <source>
        <strain>ATCC 17616 / 249</strain>
    </source>
</reference>
<gene>
    <name evidence="1" type="primary">rplO</name>
    <name type="ordered locus">Bmul_0268</name>
    <name type="ordered locus">BMULJ_02986</name>
</gene>
<accession>A9ADL2</accession>
<keyword id="KW-1185">Reference proteome</keyword>
<keyword id="KW-0687">Ribonucleoprotein</keyword>
<keyword id="KW-0689">Ribosomal protein</keyword>
<keyword id="KW-0694">RNA-binding</keyword>
<keyword id="KW-0699">rRNA-binding</keyword>